<reference key="1">
    <citation type="journal article" date="2005" name="Proc. Natl. Acad. Sci. U.S.A.">
        <title>A MAPK gene from Dead Sea fungus confers stress tolerance to lithium salt and freezing-thawing: prospects for saline agriculture.</title>
        <authorList>
            <person name="Jin Y."/>
            <person name="Weining S."/>
            <person name="Nevo E."/>
        </authorList>
    </citation>
    <scope>NUCLEOTIDE SEQUENCE [GENOMIC DNA]</scope>
    <scope>FUNCTION</scope>
</reference>
<accession>Q38HL5</accession>
<evidence type="ECO:0000250" key="1"/>
<evidence type="ECO:0000250" key="2">
    <source>
        <dbReference type="UniProtKB" id="P32485"/>
    </source>
</evidence>
<evidence type="ECO:0000250" key="3">
    <source>
        <dbReference type="UniProtKB" id="Q16539"/>
    </source>
</evidence>
<evidence type="ECO:0000250" key="4">
    <source>
        <dbReference type="UniProtKB" id="Q4WSF6"/>
    </source>
</evidence>
<evidence type="ECO:0000255" key="5">
    <source>
        <dbReference type="PROSITE-ProRule" id="PRU00159"/>
    </source>
</evidence>
<evidence type="ECO:0000255" key="6">
    <source>
        <dbReference type="PROSITE-ProRule" id="PRU10027"/>
    </source>
</evidence>
<evidence type="ECO:0000269" key="7">
    <source>
    </source>
</evidence>
<comment type="function">
    <text evidence="4 7">Proline-directed serine/threonine-protein kinase involved in a signal transduction pathway that is activated by changes in the osmolarity of the extracellular environment. Controls osmotic regulation of transcription of target genes (By similarity).</text>
</comment>
<comment type="catalytic activity">
    <reaction evidence="2">
        <text>L-seryl-[protein] + ATP = O-phospho-L-seryl-[protein] + ADP + H(+)</text>
        <dbReference type="Rhea" id="RHEA:17989"/>
        <dbReference type="Rhea" id="RHEA-COMP:9863"/>
        <dbReference type="Rhea" id="RHEA-COMP:11604"/>
        <dbReference type="ChEBI" id="CHEBI:15378"/>
        <dbReference type="ChEBI" id="CHEBI:29999"/>
        <dbReference type="ChEBI" id="CHEBI:30616"/>
        <dbReference type="ChEBI" id="CHEBI:83421"/>
        <dbReference type="ChEBI" id="CHEBI:456216"/>
        <dbReference type="EC" id="2.7.11.24"/>
    </reaction>
    <physiologicalReaction direction="left-to-right" evidence="2">
        <dbReference type="Rhea" id="RHEA:17990"/>
    </physiologicalReaction>
</comment>
<comment type="catalytic activity">
    <reaction evidence="2">
        <text>L-threonyl-[protein] + ATP = O-phospho-L-threonyl-[protein] + ADP + H(+)</text>
        <dbReference type="Rhea" id="RHEA:46608"/>
        <dbReference type="Rhea" id="RHEA-COMP:11060"/>
        <dbReference type="Rhea" id="RHEA-COMP:11605"/>
        <dbReference type="ChEBI" id="CHEBI:15378"/>
        <dbReference type="ChEBI" id="CHEBI:30013"/>
        <dbReference type="ChEBI" id="CHEBI:30616"/>
        <dbReference type="ChEBI" id="CHEBI:61977"/>
        <dbReference type="ChEBI" id="CHEBI:456216"/>
        <dbReference type="EC" id="2.7.11.24"/>
    </reaction>
    <physiologicalReaction direction="left-to-right" evidence="2">
        <dbReference type="Rhea" id="RHEA:46609"/>
    </physiologicalReaction>
</comment>
<comment type="cofactor">
    <cofactor evidence="3">
        <name>Mg(2+)</name>
        <dbReference type="ChEBI" id="CHEBI:18420"/>
    </cofactor>
</comment>
<comment type="activity regulation">
    <text evidence="1">Activated by tyrosine and threonine phosphorylation.</text>
</comment>
<comment type="subcellular location">
    <subcellularLocation>
        <location evidence="1">Cytoplasm</location>
    </subcellularLocation>
    <subcellularLocation>
        <location evidence="1">Nucleus</location>
    </subcellularLocation>
</comment>
<comment type="domain">
    <text>The TXY motif contains the threonine and tyrosine residues whose phosphorylation activates the MAP kinases.</text>
</comment>
<comment type="PTM">
    <text evidence="1">Dually phosphorylated on Thr-171 and Tyr-173, which activates the enzyme.</text>
</comment>
<comment type="similarity">
    <text evidence="5">Belongs to the protein kinase superfamily. Ser/Thr protein kinase family. MAP kinase subfamily. HOG1 sub-subfamily.</text>
</comment>
<gene>
    <name type="primary">hog1</name>
    <name type="synonym">hog</name>
</gene>
<sequence length="366" mass="41615">MAEFVRATIFGTTFEITSRYTELQPVGMGAFGLVCAARDQLTGAPVAVKKIMKPFSTPVLSKRTYRELKLLKHLGHENIICLSDIFISPLEDIYSVTELLGTDLHRLLTSRPLEKQFIQYFLYQILRGLKYVHSAGVVHRDLKPSNILINENCDLKICGFGLARVQDPQMTGYVSTRYYRAPEIMLTWQKYDVEVDIWSAGCIFAEMLDGKPLFPGKDHVNQFSIITELLGTPPDDVIETICSENTLRFVKSLPKRERQPLTSRFKNADPEAVDLLERMLVFDPKKRIRAGEALAHEYLAPYHDPTDEPEAQEKFDWSFNDADLPVDTWRIMMYSEILDFHNIDQSEDAGQVLVEGVGDGQQAFAA</sequence>
<name>HOG1_ASPGL</name>
<proteinExistence type="inferred from homology"/>
<protein>
    <recommendedName>
        <fullName>Mitogen-activated protein kinase hog1</fullName>
        <shortName>MAP kinase hog1</shortName>
        <ecNumber evidence="2">2.7.11.24</ecNumber>
    </recommendedName>
</protein>
<keyword id="KW-0010">Activator</keyword>
<keyword id="KW-0067">ATP-binding</keyword>
<keyword id="KW-0963">Cytoplasm</keyword>
<keyword id="KW-0418">Kinase</keyword>
<keyword id="KW-0547">Nucleotide-binding</keyword>
<keyword id="KW-0539">Nucleus</keyword>
<keyword id="KW-0597">Phosphoprotein</keyword>
<keyword id="KW-0723">Serine/threonine-protein kinase</keyword>
<keyword id="KW-0804">Transcription</keyword>
<keyword id="KW-0805">Transcription regulation</keyword>
<keyword id="KW-0808">Transferase</keyword>
<feature type="chain" id="PRO_0000289688" description="Mitogen-activated protein kinase hog1">
    <location>
        <begin position="1"/>
        <end position="366"/>
    </location>
</feature>
<feature type="domain" description="Protein kinase" evidence="5">
    <location>
        <begin position="20"/>
        <end position="299"/>
    </location>
</feature>
<feature type="short sequence motif" description="TXY">
    <location>
        <begin position="171"/>
        <end position="173"/>
    </location>
</feature>
<feature type="active site" description="Proton acceptor" evidence="5 6">
    <location>
        <position position="141"/>
    </location>
</feature>
<feature type="binding site" evidence="5">
    <location>
        <begin position="26"/>
        <end position="34"/>
    </location>
    <ligand>
        <name>ATP</name>
        <dbReference type="ChEBI" id="CHEBI:30616"/>
    </ligand>
</feature>
<feature type="binding site" evidence="5">
    <location>
        <position position="49"/>
    </location>
    <ligand>
        <name>ATP</name>
        <dbReference type="ChEBI" id="CHEBI:30616"/>
    </ligand>
</feature>
<feature type="modified residue" description="Phosphothreonine" evidence="1">
    <location>
        <position position="171"/>
    </location>
</feature>
<feature type="modified residue" description="Phosphotyrosine" evidence="1">
    <location>
        <position position="173"/>
    </location>
</feature>
<organism>
    <name type="scientific">Aspergillus glaucus</name>
    <name type="common">Eurotium herbariorum</name>
    <dbReference type="NCBI Taxonomy" id="41413"/>
    <lineage>
        <taxon>Eukaryota</taxon>
        <taxon>Fungi</taxon>
        <taxon>Dikarya</taxon>
        <taxon>Ascomycota</taxon>
        <taxon>Pezizomycotina</taxon>
        <taxon>Eurotiomycetes</taxon>
        <taxon>Eurotiomycetidae</taxon>
        <taxon>Eurotiales</taxon>
        <taxon>Aspergillaceae</taxon>
        <taxon>Aspergillus</taxon>
        <taxon>Aspergillus subgen. Aspergillus</taxon>
    </lineage>
</organism>
<dbReference type="EC" id="2.7.11.24" evidence="2"/>
<dbReference type="EMBL" id="DQ229154">
    <property type="protein sequence ID" value="ABB16294.1"/>
    <property type="molecule type" value="Genomic_DNA"/>
</dbReference>
<dbReference type="SMR" id="Q38HL5"/>
<dbReference type="VEuPathDB" id="FungiDB:ASPGLDRAFT_50904"/>
<dbReference type="GO" id="GO:0005737">
    <property type="term" value="C:cytoplasm"/>
    <property type="evidence" value="ECO:0007669"/>
    <property type="project" value="UniProtKB-SubCell"/>
</dbReference>
<dbReference type="GO" id="GO:0005634">
    <property type="term" value="C:nucleus"/>
    <property type="evidence" value="ECO:0007669"/>
    <property type="project" value="UniProtKB-SubCell"/>
</dbReference>
<dbReference type="GO" id="GO:0005524">
    <property type="term" value="F:ATP binding"/>
    <property type="evidence" value="ECO:0007669"/>
    <property type="project" value="UniProtKB-KW"/>
</dbReference>
<dbReference type="GO" id="GO:0004707">
    <property type="term" value="F:MAP kinase activity"/>
    <property type="evidence" value="ECO:0007669"/>
    <property type="project" value="UniProtKB-EC"/>
</dbReference>
<dbReference type="GO" id="GO:0106310">
    <property type="term" value="F:protein serine kinase activity"/>
    <property type="evidence" value="ECO:0007669"/>
    <property type="project" value="RHEA"/>
</dbReference>
<dbReference type="GO" id="GO:0051403">
    <property type="term" value="P:stress-activated MAPK cascade"/>
    <property type="evidence" value="ECO:0007669"/>
    <property type="project" value="InterPro"/>
</dbReference>
<dbReference type="CDD" id="cd07856">
    <property type="entry name" value="STKc_Sty1_Hog1"/>
    <property type="match status" value="1"/>
</dbReference>
<dbReference type="FunFam" id="1.10.510.10:FF:000049">
    <property type="entry name" value="Mitogen-activated protein kinase"/>
    <property type="match status" value="1"/>
</dbReference>
<dbReference type="FunFam" id="3.30.200.20:FF:000050">
    <property type="entry name" value="Mitogen-activated protein kinase"/>
    <property type="match status" value="1"/>
</dbReference>
<dbReference type="Gene3D" id="3.30.200.20">
    <property type="entry name" value="Phosphorylase Kinase, domain 1"/>
    <property type="match status" value="1"/>
</dbReference>
<dbReference type="Gene3D" id="1.10.510.10">
    <property type="entry name" value="Transferase(Phosphotransferase) domain 1"/>
    <property type="match status" value="1"/>
</dbReference>
<dbReference type="InterPro" id="IPR011009">
    <property type="entry name" value="Kinase-like_dom_sf"/>
</dbReference>
<dbReference type="InterPro" id="IPR050117">
    <property type="entry name" value="MAP_kinase"/>
</dbReference>
<dbReference type="InterPro" id="IPR003527">
    <property type="entry name" value="MAP_kinase_CS"/>
</dbReference>
<dbReference type="InterPro" id="IPR008352">
    <property type="entry name" value="MAPK_p38-like"/>
</dbReference>
<dbReference type="InterPro" id="IPR038783">
    <property type="entry name" value="MAPK_Sty1/Hog1"/>
</dbReference>
<dbReference type="InterPro" id="IPR000719">
    <property type="entry name" value="Prot_kinase_dom"/>
</dbReference>
<dbReference type="InterPro" id="IPR017441">
    <property type="entry name" value="Protein_kinase_ATP_BS"/>
</dbReference>
<dbReference type="InterPro" id="IPR008271">
    <property type="entry name" value="Ser/Thr_kinase_AS"/>
</dbReference>
<dbReference type="PANTHER" id="PTHR24055">
    <property type="entry name" value="MITOGEN-ACTIVATED PROTEIN KINASE"/>
    <property type="match status" value="1"/>
</dbReference>
<dbReference type="Pfam" id="PF00069">
    <property type="entry name" value="Pkinase"/>
    <property type="match status" value="1"/>
</dbReference>
<dbReference type="PRINTS" id="PR01773">
    <property type="entry name" value="P38MAPKINASE"/>
</dbReference>
<dbReference type="SMART" id="SM00220">
    <property type="entry name" value="S_TKc"/>
    <property type="match status" value="1"/>
</dbReference>
<dbReference type="SUPFAM" id="SSF56112">
    <property type="entry name" value="Protein kinase-like (PK-like)"/>
    <property type="match status" value="1"/>
</dbReference>
<dbReference type="PROSITE" id="PS01351">
    <property type="entry name" value="MAPK"/>
    <property type="match status" value="1"/>
</dbReference>
<dbReference type="PROSITE" id="PS00107">
    <property type="entry name" value="PROTEIN_KINASE_ATP"/>
    <property type="match status" value="1"/>
</dbReference>
<dbReference type="PROSITE" id="PS50011">
    <property type="entry name" value="PROTEIN_KINASE_DOM"/>
    <property type="match status" value="1"/>
</dbReference>
<dbReference type="PROSITE" id="PS00108">
    <property type="entry name" value="PROTEIN_KINASE_ST"/>
    <property type="match status" value="1"/>
</dbReference>